<feature type="chain" id="PRO_0000289702" description="Mitogen-activated protein kinase HOG1">
    <location>
        <begin position="1"/>
        <end position="427"/>
    </location>
</feature>
<feature type="domain" description="Protein kinase" evidence="5">
    <location>
        <begin position="23"/>
        <end position="302"/>
    </location>
</feature>
<feature type="region of interest" description="Disordered" evidence="7">
    <location>
        <begin position="380"/>
        <end position="409"/>
    </location>
</feature>
<feature type="short sequence motif" description="TXY">
    <location>
        <begin position="174"/>
        <end position="176"/>
    </location>
</feature>
<feature type="compositionally biased region" description="Low complexity" evidence="7">
    <location>
        <begin position="380"/>
        <end position="400"/>
    </location>
</feature>
<feature type="active site" description="Proton acceptor" evidence="5 6">
    <location>
        <position position="144"/>
    </location>
</feature>
<feature type="binding site" evidence="5">
    <location>
        <begin position="29"/>
        <end position="37"/>
    </location>
    <ligand>
        <name>ATP</name>
        <dbReference type="ChEBI" id="CHEBI:30616"/>
    </ligand>
</feature>
<feature type="binding site" evidence="5">
    <location>
        <position position="52"/>
    </location>
    <ligand>
        <name>ATP</name>
        <dbReference type="ChEBI" id="CHEBI:30616"/>
    </ligand>
</feature>
<feature type="modified residue" description="Phosphothreonine" evidence="1">
    <location>
        <position position="174"/>
    </location>
</feature>
<feature type="modified residue" description="Phosphotyrosine" evidence="1">
    <location>
        <position position="176"/>
    </location>
</feature>
<dbReference type="EC" id="2.7.11.24" evidence="2"/>
<dbReference type="EMBL" id="DQ020519">
    <property type="protein sequence ID" value="AAY84830.1"/>
    <property type="molecule type" value="Genomic_DNA"/>
</dbReference>
<dbReference type="SMR" id="Q1L5Z8"/>
<dbReference type="GO" id="GO:0005737">
    <property type="term" value="C:cytoplasm"/>
    <property type="evidence" value="ECO:0007669"/>
    <property type="project" value="UniProtKB-SubCell"/>
</dbReference>
<dbReference type="GO" id="GO:0005634">
    <property type="term" value="C:nucleus"/>
    <property type="evidence" value="ECO:0007669"/>
    <property type="project" value="UniProtKB-SubCell"/>
</dbReference>
<dbReference type="GO" id="GO:0005524">
    <property type="term" value="F:ATP binding"/>
    <property type="evidence" value="ECO:0007669"/>
    <property type="project" value="UniProtKB-KW"/>
</dbReference>
<dbReference type="GO" id="GO:0004707">
    <property type="term" value="F:MAP kinase activity"/>
    <property type="evidence" value="ECO:0007669"/>
    <property type="project" value="UniProtKB-EC"/>
</dbReference>
<dbReference type="GO" id="GO:0106310">
    <property type="term" value="F:protein serine kinase activity"/>
    <property type="evidence" value="ECO:0007669"/>
    <property type="project" value="RHEA"/>
</dbReference>
<dbReference type="GO" id="GO:0051403">
    <property type="term" value="P:stress-activated MAPK cascade"/>
    <property type="evidence" value="ECO:0007669"/>
    <property type="project" value="InterPro"/>
</dbReference>
<dbReference type="CDD" id="cd07856">
    <property type="entry name" value="STKc_Sty1_Hog1"/>
    <property type="match status" value="1"/>
</dbReference>
<dbReference type="FunFam" id="1.10.510.10:FF:000049">
    <property type="entry name" value="Mitogen-activated protein kinase"/>
    <property type="match status" value="1"/>
</dbReference>
<dbReference type="FunFam" id="3.30.200.20:FF:000050">
    <property type="entry name" value="Mitogen-activated protein kinase"/>
    <property type="match status" value="1"/>
</dbReference>
<dbReference type="Gene3D" id="3.30.200.20">
    <property type="entry name" value="Phosphorylase Kinase, domain 1"/>
    <property type="match status" value="1"/>
</dbReference>
<dbReference type="Gene3D" id="1.10.510.10">
    <property type="entry name" value="Transferase(Phosphotransferase) domain 1"/>
    <property type="match status" value="1"/>
</dbReference>
<dbReference type="InterPro" id="IPR011009">
    <property type="entry name" value="Kinase-like_dom_sf"/>
</dbReference>
<dbReference type="InterPro" id="IPR050117">
    <property type="entry name" value="MAP_kinase"/>
</dbReference>
<dbReference type="InterPro" id="IPR003527">
    <property type="entry name" value="MAP_kinase_CS"/>
</dbReference>
<dbReference type="InterPro" id="IPR008352">
    <property type="entry name" value="MAPK_p38-like"/>
</dbReference>
<dbReference type="InterPro" id="IPR038783">
    <property type="entry name" value="MAPK_Sty1/Hog1"/>
</dbReference>
<dbReference type="InterPro" id="IPR000719">
    <property type="entry name" value="Prot_kinase_dom"/>
</dbReference>
<dbReference type="InterPro" id="IPR017441">
    <property type="entry name" value="Protein_kinase_ATP_BS"/>
</dbReference>
<dbReference type="InterPro" id="IPR008271">
    <property type="entry name" value="Ser/Thr_kinase_AS"/>
</dbReference>
<dbReference type="PANTHER" id="PTHR24055">
    <property type="entry name" value="MITOGEN-ACTIVATED PROTEIN KINASE"/>
    <property type="match status" value="1"/>
</dbReference>
<dbReference type="Pfam" id="PF00069">
    <property type="entry name" value="Pkinase"/>
    <property type="match status" value="1"/>
</dbReference>
<dbReference type="PRINTS" id="PR01773">
    <property type="entry name" value="P38MAPKINASE"/>
</dbReference>
<dbReference type="SMART" id="SM00220">
    <property type="entry name" value="S_TKc"/>
    <property type="match status" value="1"/>
</dbReference>
<dbReference type="SUPFAM" id="SSF56112">
    <property type="entry name" value="Protein kinase-like (PK-like)"/>
    <property type="match status" value="1"/>
</dbReference>
<dbReference type="PROSITE" id="PS01351">
    <property type="entry name" value="MAPK"/>
    <property type="match status" value="1"/>
</dbReference>
<dbReference type="PROSITE" id="PS00107">
    <property type="entry name" value="PROTEIN_KINASE_ATP"/>
    <property type="match status" value="1"/>
</dbReference>
<dbReference type="PROSITE" id="PS50011">
    <property type="entry name" value="PROTEIN_KINASE_DOM"/>
    <property type="match status" value="1"/>
</dbReference>
<dbReference type="PROSITE" id="PS00108">
    <property type="entry name" value="PROTEIN_KINASE_ST"/>
    <property type="match status" value="1"/>
</dbReference>
<evidence type="ECO:0000250" key="1"/>
<evidence type="ECO:0000250" key="2">
    <source>
        <dbReference type="UniProtKB" id="P32485"/>
    </source>
</evidence>
<evidence type="ECO:0000250" key="3">
    <source>
        <dbReference type="UniProtKB" id="Q16539"/>
    </source>
</evidence>
<evidence type="ECO:0000250" key="4">
    <source>
        <dbReference type="UniProtKB" id="Q4WSF6"/>
    </source>
</evidence>
<evidence type="ECO:0000255" key="5">
    <source>
        <dbReference type="PROSITE-ProRule" id="PRU00159"/>
    </source>
</evidence>
<evidence type="ECO:0000255" key="6">
    <source>
        <dbReference type="PROSITE-ProRule" id="PRU10027"/>
    </source>
</evidence>
<evidence type="ECO:0000256" key="7">
    <source>
        <dbReference type="SAM" id="MobiDB-lite"/>
    </source>
</evidence>
<evidence type="ECO:0000269" key="8">
    <source>
    </source>
</evidence>
<protein>
    <recommendedName>
        <fullName>Mitogen-activated protein kinase HOG1</fullName>
        <shortName>MAP kinase HOG1</shortName>
        <ecNumber evidence="2">2.7.11.24</ecNumber>
    </recommendedName>
</protein>
<proteinExistence type="evidence at protein level"/>
<accession>Q1L5Z8</accession>
<comment type="function">
    <text evidence="4 8">Proline-directed serine/threonine-protein kinase involved in a signal transduction pathway that is activated by changes in the osmolarity of the extracellular environment. Controls osmotic regulation of transcription of target genes (By similarity). Involved in resistance to osmotic stress and tolerance to methylglyoxal and citric acid.</text>
</comment>
<comment type="catalytic activity">
    <reaction evidence="2">
        <text>L-seryl-[protein] + ATP = O-phospho-L-seryl-[protein] + ADP + H(+)</text>
        <dbReference type="Rhea" id="RHEA:17989"/>
        <dbReference type="Rhea" id="RHEA-COMP:9863"/>
        <dbReference type="Rhea" id="RHEA-COMP:11604"/>
        <dbReference type="ChEBI" id="CHEBI:15378"/>
        <dbReference type="ChEBI" id="CHEBI:29999"/>
        <dbReference type="ChEBI" id="CHEBI:30616"/>
        <dbReference type="ChEBI" id="CHEBI:83421"/>
        <dbReference type="ChEBI" id="CHEBI:456216"/>
        <dbReference type="EC" id="2.7.11.24"/>
    </reaction>
    <physiologicalReaction direction="left-to-right" evidence="2">
        <dbReference type="Rhea" id="RHEA:17990"/>
    </physiologicalReaction>
</comment>
<comment type="catalytic activity">
    <reaction evidence="2">
        <text>L-threonyl-[protein] + ATP = O-phospho-L-threonyl-[protein] + ADP + H(+)</text>
        <dbReference type="Rhea" id="RHEA:46608"/>
        <dbReference type="Rhea" id="RHEA-COMP:11060"/>
        <dbReference type="Rhea" id="RHEA-COMP:11605"/>
        <dbReference type="ChEBI" id="CHEBI:15378"/>
        <dbReference type="ChEBI" id="CHEBI:30013"/>
        <dbReference type="ChEBI" id="CHEBI:30616"/>
        <dbReference type="ChEBI" id="CHEBI:61977"/>
        <dbReference type="ChEBI" id="CHEBI:456216"/>
        <dbReference type="EC" id="2.7.11.24"/>
    </reaction>
    <physiologicalReaction direction="left-to-right" evidence="2">
        <dbReference type="Rhea" id="RHEA:46609"/>
    </physiologicalReaction>
</comment>
<comment type="cofactor">
    <cofactor evidence="3">
        <name>Mg(2+)</name>
        <dbReference type="ChEBI" id="CHEBI:18420"/>
    </cofactor>
</comment>
<comment type="activity regulation">
    <text evidence="1">Activated by tyrosine and threonine phosphorylation.</text>
</comment>
<comment type="subcellular location">
    <subcellularLocation>
        <location evidence="1">Cytoplasm</location>
    </subcellularLocation>
    <subcellularLocation>
        <location evidence="1">Nucleus</location>
    </subcellularLocation>
</comment>
<comment type="domain">
    <text>The TXY motif contains the threonine and tyrosine residues whose phosphorylation activates the MAP kinases.</text>
</comment>
<comment type="PTM">
    <text evidence="1 8">Dually phosphorylated on Thr-174 and Tyr-176, which activates the enzyme (By similarity). Phosphorylated during osmotic stress.</text>
</comment>
<comment type="similarity">
    <text evidence="5">Belongs to the protein kinase superfamily. Ser/Thr protein kinase family. MAP kinase subfamily. HOG1 sub-subfamily.</text>
</comment>
<sequence>MATHEEFIRTQVFGTVFEITNRYTDLNPVGMGAFGLVCSATDTLAQQPVAIKKIMKPFSTAVLAKRTYRELKLLKHLRHENLICLQDIFLSPLEDIYFVTELQGTDLHRLLQTRPLEKQFVQYFLYQILRGLKYVHSAGVIHRDLKPSNILINENCDLKICDFGLARIQDPQMTGYVSTRYYRAPEIMLTWQKYDVEVDIWSAGCIFAEMTEGKPLFPGKDHVHQFSIITDLLGSPPEDVINTICSENTLKFVTSLPHRDPVPFRERFKTVEPEAVDLLEKMLVFDPKKRITAADALVHPYLAPYHDPTDEPVADAKFDWNFNDADLPVDTWRVMMYSEILDFHKIGGGDGQIDTSATFDDQVAAATAAAAHAAAVAQAQAQAHSNSSNSNSSSNVNSKSKAARDSANDAITNYGNQAVHYANEFQQ</sequence>
<organism>
    <name type="scientific">Torulaspora delbrueckii</name>
    <name type="common">Yeast</name>
    <name type="synonym">Candida colliculosa</name>
    <dbReference type="NCBI Taxonomy" id="4950"/>
    <lineage>
        <taxon>Eukaryota</taxon>
        <taxon>Fungi</taxon>
        <taxon>Dikarya</taxon>
        <taxon>Ascomycota</taxon>
        <taxon>Saccharomycotina</taxon>
        <taxon>Saccharomycetes</taxon>
        <taxon>Saccharomycetales</taxon>
        <taxon>Saccharomycetaceae</taxon>
        <taxon>Torulaspora</taxon>
    </lineage>
</organism>
<keyword id="KW-0010">Activator</keyword>
<keyword id="KW-0067">ATP-binding</keyword>
<keyword id="KW-0963">Cytoplasm</keyword>
<keyword id="KW-0418">Kinase</keyword>
<keyword id="KW-0547">Nucleotide-binding</keyword>
<keyword id="KW-0539">Nucleus</keyword>
<keyword id="KW-0597">Phosphoprotein</keyword>
<keyword id="KW-0723">Serine/threonine-protein kinase</keyword>
<keyword id="KW-0804">Transcription</keyword>
<keyword id="KW-0805">Transcription regulation</keyword>
<keyword id="KW-0808">Transferase</keyword>
<name>HOG1_TORDE</name>
<reference key="1">
    <citation type="journal article" date="2006" name="Eukaryot. Cell">
        <title>Hog1 mitogen-activated protein kinase plays conserved and distinct roles in the osmotolerant yeast Torulaspora delbrueckii.</title>
        <authorList>
            <person name="Hernandez-Lopez M.J."/>
            <person name="Randez-Gil F."/>
            <person name="Prieto J.A."/>
        </authorList>
    </citation>
    <scope>NUCLEOTIDE SEQUENCE [GENOMIC DNA]</scope>
    <scope>FUNCTION</scope>
    <scope>PHOSPHORYLATION</scope>
    <source>
        <strain>PYCC 5321 / CECT 11342</strain>
    </source>
</reference>
<gene>
    <name type="primary">HOG1</name>
</gene>